<evidence type="ECO:0000250" key="1"/>
<evidence type="ECO:0000250" key="2">
    <source>
        <dbReference type="UniProtKB" id="Q9P2B2"/>
    </source>
</evidence>
<evidence type="ECO:0000250" key="3">
    <source>
        <dbReference type="UniProtKB" id="Q9WV91"/>
    </source>
</evidence>
<evidence type="ECO:0000255" key="4"/>
<evidence type="ECO:0000255" key="5">
    <source>
        <dbReference type="PROSITE-ProRule" id="PRU00114"/>
    </source>
</evidence>
<evidence type="ECO:0007744" key="6">
    <source>
    </source>
</evidence>
<sequence length="879" mass="98731">MGRPAPRPLLLALLSLAVCRGRVVRVPAGTLVRVVGTELVIPCNVSDYDGPSEQNFDWSFSSSGSSFVELASTWEVGFPAQQYRERLQRGDILLRRTANDAVELHIKNVQPSDQGHYKCSTPSTDATVQGNYEDTMQVKVLADALVVGPSSRPPPGLSLREGEPFELRCIASTTSPLHTHLALRWELHRGPVHRSILALSHEGRFHPGPGYEQRYHSGDVRLDTVGSDAYRLSVARALSADQGSYRCVVSEWITEQGSWQEIQEKAVEVATVVIQPTALQLAVPRTVSVTEGKDLDLSCNITTDRVDDVRPEVTWYFKKTPDTSLLASHMLARLDRDSLVHSSPHVALSHVDTRSYHLLVRDVSKENSGYYLCLVALWAPGHNRSWHKVAEAMSAPSGVSVTWLEPEYQVYLNASKVPGFSDDPTELQCRVIDTKRVDAGVRLTVSWYYRMNRRNDDVVASELLAVMDGDWTLRYGERSKQRAQDGEFIFSKEHTDTFSFRIQRTTEEDRGSYYCVVSAWTRQRNSSWVKSKDVFSKPVNIFWASEDSVLVVKARQPKPFFAAGNTFEMTCKVSSKNIKSPRYSVLITAEKPVGDLSSPNETKYIISLDQDSVVKLENWTDASRVDGVVLEKVQEDEFRYRMYQTQVSDAGLYRCMVTAWSPIGGSLWREAATSLSNPIEIDFQTSGPIFNASVHSDTLSVTRGDLIKLFCIVTVDGAVLDPDDMAFDVSWFAVHSFGLDKAPILLSSLDRKGVVTTGQRDWKSTVSLERVSVLEFLLQVHSSEDQDFGNYYCSVTPWVRSPTGSWQREAEIHSRPIFITVKMDVLNAFKYPLLIGVGLSTVIGLLSCLIGYCSSHWCCKKEVRETRRERRRLMSMEMD</sequence>
<organism>
    <name type="scientific">Rattus norvegicus</name>
    <name type="common">Rat</name>
    <dbReference type="NCBI Taxonomy" id="10116"/>
    <lineage>
        <taxon>Eukaryota</taxon>
        <taxon>Metazoa</taxon>
        <taxon>Chordata</taxon>
        <taxon>Craniata</taxon>
        <taxon>Vertebrata</taxon>
        <taxon>Euteleostomi</taxon>
        <taxon>Mammalia</taxon>
        <taxon>Eutheria</taxon>
        <taxon>Euarchontoglires</taxon>
        <taxon>Glires</taxon>
        <taxon>Rodentia</taxon>
        <taxon>Myomorpha</taxon>
        <taxon>Muroidea</taxon>
        <taxon>Muridae</taxon>
        <taxon>Murinae</taxon>
        <taxon>Rattus</taxon>
    </lineage>
</organism>
<reference key="1">
    <citation type="journal article" date="1996" name="Prostaglandins Leukot. Essent. Fatty Acids">
        <title>Cloning, sequencing and proposed structure for a prostaglandin F2 alpha receptor regulatory protein.</title>
        <authorList>
            <person name="Orlicky D.J."/>
            <person name="Nordeen S.K."/>
        </authorList>
    </citation>
    <scope>NUCLEOTIDE SEQUENCE [MRNA]</scope>
    <source>
        <strain>Sprague-Dawley</strain>
        <tissue>Ovary</tissue>
    </source>
</reference>
<reference key="2">
    <citation type="journal article" date="1996" name="Prostaglandins Leukot. Essent. Fatty Acids">
        <title>Negative regulatory activity of a prostaglandin F2 alpha receptor associated protein (FPRP).</title>
        <authorList>
            <person name="Orlicky D.J."/>
        </authorList>
    </citation>
    <scope>CHARACTERIZATION</scope>
    <source>
        <strain>Sprague-Dawley</strain>
        <tissue>Ovary</tissue>
    </source>
</reference>
<reference key="3">
    <citation type="journal article" date="2006" name="Proc. Natl. Acad. Sci. U.S.A.">
        <title>Quantitative phosphoproteomics of vasopressin-sensitive renal cells: regulation of aquaporin-2 phosphorylation at two sites.</title>
        <authorList>
            <person name="Hoffert J.D."/>
            <person name="Pisitkun T."/>
            <person name="Wang G."/>
            <person name="Shen R.-F."/>
            <person name="Knepper M.A."/>
        </authorList>
    </citation>
    <scope>PHOSPHORYLATION [LARGE SCALE ANALYSIS] AT THR-271</scope>
    <scope>IDENTIFICATION BY MASS SPECTROMETRY [LARGE SCALE ANALYSIS]</scope>
</reference>
<keyword id="KW-1015">Disulfide bond</keyword>
<keyword id="KW-0256">Endoplasmic reticulum</keyword>
<keyword id="KW-0325">Glycoprotein</keyword>
<keyword id="KW-0333">Golgi apparatus</keyword>
<keyword id="KW-0393">Immunoglobulin domain</keyword>
<keyword id="KW-0472">Membrane</keyword>
<keyword id="KW-0597">Phosphoprotein</keyword>
<keyword id="KW-1185">Reference proteome</keyword>
<keyword id="KW-0677">Repeat</keyword>
<keyword id="KW-0732">Signal</keyword>
<keyword id="KW-0812">Transmembrane</keyword>
<keyword id="KW-1133">Transmembrane helix</keyword>
<dbReference type="EMBL" id="U26595">
    <property type="protein sequence ID" value="AAC18426.1"/>
    <property type="molecule type" value="mRNA"/>
</dbReference>
<dbReference type="RefSeq" id="NP_062116.1">
    <property type="nucleotide sequence ID" value="NM_019243.1"/>
</dbReference>
<dbReference type="FunCoup" id="Q62786">
    <property type="interactions" value="1064"/>
</dbReference>
<dbReference type="IntAct" id="Q62786">
    <property type="interactions" value="1"/>
</dbReference>
<dbReference type="STRING" id="10116.ENSRNOP00000021162"/>
<dbReference type="GlyCosmos" id="Q62786">
    <property type="glycosylation" value="8 sites, No reported glycans"/>
</dbReference>
<dbReference type="GlyGen" id="Q62786">
    <property type="glycosylation" value="9 sites"/>
</dbReference>
<dbReference type="iPTMnet" id="Q62786"/>
<dbReference type="PhosphoSitePlus" id="Q62786"/>
<dbReference type="SwissPalm" id="Q62786"/>
<dbReference type="jPOST" id="Q62786"/>
<dbReference type="PaxDb" id="10116-ENSRNOP00000021162"/>
<dbReference type="GeneID" id="29602"/>
<dbReference type="KEGG" id="rno:29602"/>
<dbReference type="UCSC" id="RGD:3437">
    <property type="organism name" value="rat"/>
</dbReference>
<dbReference type="AGR" id="RGD:3437"/>
<dbReference type="CTD" id="5738"/>
<dbReference type="RGD" id="3437">
    <property type="gene designation" value="Ptgfrn"/>
</dbReference>
<dbReference type="eggNOG" id="ENOG502QVD2">
    <property type="taxonomic scope" value="Eukaryota"/>
</dbReference>
<dbReference type="InParanoid" id="Q62786"/>
<dbReference type="PhylomeDB" id="Q62786"/>
<dbReference type="PRO" id="PR:Q62786"/>
<dbReference type="Proteomes" id="UP000002494">
    <property type="component" value="Unplaced"/>
</dbReference>
<dbReference type="GO" id="GO:0005789">
    <property type="term" value="C:endoplasmic reticulum membrane"/>
    <property type="evidence" value="ECO:0007669"/>
    <property type="project" value="UniProtKB-SubCell"/>
</dbReference>
<dbReference type="GO" id="GO:0005794">
    <property type="term" value="C:Golgi apparatus"/>
    <property type="evidence" value="ECO:0007669"/>
    <property type="project" value="UniProtKB-SubCell"/>
</dbReference>
<dbReference type="GO" id="GO:0016020">
    <property type="term" value="C:membrane"/>
    <property type="evidence" value="ECO:0000318"/>
    <property type="project" value="GO_Central"/>
</dbReference>
<dbReference type="GO" id="GO:0034389">
    <property type="term" value="P:lipid droplet organization"/>
    <property type="evidence" value="ECO:0000266"/>
    <property type="project" value="RGD"/>
</dbReference>
<dbReference type="GO" id="GO:0014905">
    <property type="term" value="P:myoblast fusion involved in skeletal muscle regeneration"/>
    <property type="evidence" value="ECO:0000250"/>
    <property type="project" value="UniProtKB"/>
</dbReference>
<dbReference type="GO" id="GO:0017148">
    <property type="term" value="P:negative regulation of translation"/>
    <property type="evidence" value="ECO:0000303"/>
    <property type="project" value="UniProtKB"/>
</dbReference>
<dbReference type="FunFam" id="2.60.40.10:FF:000191">
    <property type="entry name" value="Immunoglobulin superfamily member 3"/>
    <property type="match status" value="1"/>
</dbReference>
<dbReference type="FunFam" id="2.60.40.10:FF:001070">
    <property type="entry name" value="Prostaglandin F2 receptor inhibitor"/>
    <property type="match status" value="1"/>
</dbReference>
<dbReference type="FunFam" id="2.60.40.10:FF:002026">
    <property type="entry name" value="Prostaglandin F2 receptor inhibitor"/>
    <property type="match status" value="1"/>
</dbReference>
<dbReference type="FunFam" id="2.60.40.10:FF:000854">
    <property type="entry name" value="Prostaglandin F2 receptor negative regulator"/>
    <property type="match status" value="1"/>
</dbReference>
<dbReference type="FunFam" id="2.60.40.10:FF:000995">
    <property type="entry name" value="prostaglandin F2 receptor negative regulator"/>
    <property type="match status" value="1"/>
</dbReference>
<dbReference type="Gene3D" id="2.60.40.10">
    <property type="entry name" value="Immunoglobulins"/>
    <property type="match status" value="5"/>
</dbReference>
<dbReference type="InterPro" id="IPR007110">
    <property type="entry name" value="Ig-like_dom"/>
</dbReference>
<dbReference type="InterPro" id="IPR036179">
    <property type="entry name" value="Ig-like_dom_sf"/>
</dbReference>
<dbReference type="InterPro" id="IPR013783">
    <property type="entry name" value="Ig-like_fold"/>
</dbReference>
<dbReference type="InterPro" id="IPR003599">
    <property type="entry name" value="Ig_sub"/>
</dbReference>
<dbReference type="InterPro" id="IPR013106">
    <property type="entry name" value="Ig_V-set"/>
</dbReference>
<dbReference type="InterPro" id="IPR051102">
    <property type="entry name" value="IgSF_V-set/TM_domain"/>
</dbReference>
<dbReference type="PANTHER" id="PTHR12207:SF3">
    <property type="entry name" value="PROSTAGLANDIN F2 RECEPTOR NEGATIVE REGULATOR"/>
    <property type="match status" value="1"/>
</dbReference>
<dbReference type="PANTHER" id="PTHR12207">
    <property type="entry name" value="V-SET AND TRANSMEMBRANE DOMAIN-CONTAINING PROTEIN"/>
    <property type="match status" value="1"/>
</dbReference>
<dbReference type="Pfam" id="PF07686">
    <property type="entry name" value="V-set"/>
    <property type="match status" value="2"/>
</dbReference>
<dbReference type="SMART" id="SM00409">
    <property type="entry name" value="IG"/>
    <property type="match status" value="6"/>
</dbReference>
<dbReference type="SMART" id="SM00406">
    <property type="entry name" value="IGv"/>
    <property type="match status" value="3"/>
</dbReference>
<dbReference type="SUPFAM" id="SSF48726">
    <property type="entry name" value="Immunoglobulin"/>
    <property type="match status" value="5"/>
</dbReference>
<dbReference type="PROSITE" id="PS50835">
    <property type="entry name" value="IG_LIKE"/>
    <property type="match status" value="5"/>
</dbReference>
<feature type="signal peptide" evidence="4">
    <location>
        <begin position="1"/>
        <end position="21"/>
    </location>
</feature>
<feature type="chain" id="PRO_0000014764" description="Prostaglandin F2 receptor negative regulator">
    <location>
        <begin position="22"/>
        <end position="879"/>
    </location>
</feature>
<feature type="topological domain" description="Extracellular" evidence="4">
    <location>
        <begin position="22"/>
        <end position="832"/>
    </location>
</feature>
<feature type="transmembrane region" description="Helical" evidence="4">
    <location>
        <begin position="833"/>
        <end position="853"/>
    </location>
</feature>
<feature type="topological domain" description="Cytoplasmic" evidence="4">
    <location>
        <begin position="854"/>
        <end position="879"/>
    </location>
</feature>
<feature type="domain" description="Ig-like C2-type 1">
    <location>
        <begin position="22"/>
        <end position="129"/>
    </location>
</feature>
<feature type="domain" description="Ig-like C2-type 2">
    <location>
        <begin position="149"/>
        <end position="268"/>
    </location>
</feature>
<feature type="domain" description="Ig-like C2-type 3">
    <location>
        <begin position="276"/>
        <end position="389"/>
    </location>
</feature>
<feature type="domain" description="Ig-like C2-type 4">
    <location>
        <begin position="406"/>
        <end position="527"/>
    </location>
</feature>
<feature type="domain" description="Ig-like C2-type 5">
    <location>
        <begin position="544"/>
        <end position="662"/>
    </location>
</feature>
<feature type="domain" description="Ig-like C2-type 6">
    <location>
        <begin position="688"/>
        <end position="813"/>
    </location>
</feature>
<feature type="short sequence motif" description="Cell attachment site" evidence="4">
    <location>
        <begin position="89"/>
        <end position="91"/>
    </location>
</feature>
<feature type="short sequence motif" description="Endoplasmic reticulum retention signal">
    <location>
        <begin position="424"/>
        <end position="427"/>
    </location>
</feature>
<feature type="short sequence motif" description="Cell attachment site" evidence="4">
    <location>
        <begin position="703"/>
        <end position="705"/>
    </location>
</feature>
<feature type="modified residue" description="Phosphothreonine" evidence="6">
    <location>
        <position position="271"/>
    </location>
</feature>
<feature type="glycosylation site" description="N-linked (GlcNAc...) asparagine" evidence="4">
    <location>
        <position position="44"/>
    </location>
</feature>
<feature type="glycosylation site" description="N-linked (GlcNAc...) asparagine" evidence="4">
    <location>
        <position position="300"/>
    </location>
</feature>
<feature type="glycosylation site" description="N-linked (GlcNAc...) asparagine" evidence="4">
    <location>
        <position position="383"/>
    </location>
</feature>
<feature type="glycosylation site" description="N-linked (GlcNAc...) asparagine" evidence="4">
    <location>
        <position position="413"/>
    </location>
</feature>
<feature type="glycosylation site" description="N-linked (GlcNAc...) asparagine" evidence="4">
    <location>
        <position position="525"/>
    </location>
</feature>
<feature type="glycosylation site" description="N-linked (GlcNAc...) asparagine" evidence="4">
    <location>
        <position position="600"/>
    </location>
</feature>
<feature type="glycosylation site" description="N-linked (GlcNAc...) asparagine" evidence="4">
    <location>
        <position position="618"/>
    </location>
</feature>
<feature type="glycosylation site" description="N-linked (GlcNAc...) asparagine" evidence="4">
    <location>
        <position position="691"/>
    </location>
</feature>
<feature type="disulfide bond" evidence="5">
    <location>
        <begin position="43"/>
        <end position="119"/>
    </location>
</feature>
<feature type="disulfide bond" evidence="5">
    <location>
        <begin position="169"/>
        <end position="247"/>
    </location>
</feature>
<feature type="disulfide bond" evidence="5">
    <location>
        <begin position="299"/>
        <end position="373"/>
    </location>
</feature>
<feature type="disulfide bond" evidence="5">
    <location>
        <begin position="429"/>
        <end position="515"/>
    </location>
</feature>
<feature type="disulfide bond" evidence="5">
    <location>
        <begin position="571"/>
        <end position="655"/>
    </location>
</feature>
<feature type="disulfide bond" evidence="5">
    <location>
        <begin position="711"/>
        <end position="793"/>
    </location>
</feature>
<feature type="sequence variant">
    <original>D</original>
    <variation>G</variation>
    <location>
        <position position="47"/>
    </location>
</feature>
<feature type="sequence variant">
    <original>M</original>
    <variation>V</variation>
    <location>
        <position position="136"/>
    </location>
</feature>
<feature type="sequence variant">
    <original>S</original>
    <variation>G</variation>
    <location>
        <position position="782"/>
    </location>
</feature>
<feature type="sequence variant">
    <original>G</original>
    <variation>R</variation>
    <location>
        <position position="844"/>
    </location>
</feature>
<accession>Q62786</accession>
<proteinExistence type="evidence at protein level"/>
<comment type="function">
    <text evidence="1 3">Inhibits the binding of prostaglandin F2-alpha (PGF2-alpha) to its specific FP receptor, by decreasing the receptor number rather than the affinity constant. Functional coupling with the prostaglandin F2-alpha receptor seems to occur (By similarity). In myoblasts, associates with tetraspanins CD9 and CD81 to prevent myotube fusion during muscle regeneration (By similarity).</text>
</comment>
<comment type="subunit">
    <text evidence="2 3">Interacts with CD9 and CD81 (By similarity). Part of a complex composed of CD9, CD81 and IGSF8 (By similarity). Also seems to interact with CD63, CD82 and CD151 (By similarity).</text>
</comment>
<comment type="subcellular location">
    <subcellularLocation>
        <location>Endoplasmic reticulum membrane</location>
        <topology>Single-pass type I membrane protein</topology>
    </subcellularLocation>
    <subcellularLocation>
        <location>Golgi apparatus</location>
        <location>trans-Golgi network membrane</location>
        <topology>Single-pass type I membrane protein</topology>
    </subcellularLocation>
</comment>
<comment type="tissue specificity">
    <text>Reproductive tissues, lung and heart.</text>
</comment>
<name>FPRP_RAT</name>
<gene>
    <name type="primary">Ptgfrn</name>
    <name type="synonym">Fprp</name>
</gene>
<protein>
    <recommendedName>
        <fullName>Prostaglandin F2 receptor negative regulator</fullName>
    </recommendedName>
    <alternativeName>
        <fullName>CD9 partner 1</fullName>
        <shortName>CD9P-1</shortName>
    </alternativeName>
    <alternativeName>
        <fullName>Glu-Trp-Ile EWI motif-containing protein F</fullName>
        <shortName>EWI-F</shortName>
    </alternativeName>
    <alternativeName>
        <fullName>Prostaglandin F2-alpha receptor regulatory protein</fullName>
    </alternativeName>
    <alternativeName>
        <fullName>Prostaglandin F2-alpha receptor-associated protein</fullName>
    </alternativeName>
    <cdAntigenName>CD315</cdAntigenName>
</protein>